<evidence type="ECO:0000255" key="1">
    <source>
        <dbReference type="HAMAP-Rule" id="MF_00184"/>
    </source>
</evidence>
<evidence type="ECO:0000256" key="2">
    <source>
        <dbReference type="SAM" id="MobiDB-lite"/>
    </source>
</evidence>
<organism>
    <name type="scientific">Synechococcus sp. (strain CC9605)</name>
    <dbReference type="NCBI Taxonomy" id="110662"/>
    <lineage>
        <taxon>Bacteria</taxon>
        <taxon>Bacillati</taxon>
        <taxon>Cyanobacteriota</taxon>
        <taxon>Cyanophyceae</taxon>
        <taxon>Synechococcales</taxon>
        <taxon>Synechococcaceae</taxon>
        <taxon>Synechococcus</taxon>
    </lineage>
</organism>
<reference key="1">
    <citation type="submission" date="2005-07" db="EMBL/GenBank/DDBJ databases">
        <title>Complete sequence of Synechococcus sp. CC9605.</title>
        <authorList>
            <consortium name="US DOE Joint Genome Institute"/>
            <person name="Copeland A."/>
            <person name="Lucas S."/>
            <person name="Lapidus A."/>
            <person name="Barry K."/>
            <person name="Detter J.C."/>
            <person name="Glavina T."/>
            <person name="Hammon N."/>
            <person name="Israni S."/>
            <person name="Pitluck S."/>
            <person name="Schmutz J."/>
            <person name="Martinez M."/>
            <person name="Larimer F."/>
            <person name="Land M."/>
            <person name="Kyrpides N."/>
            <person name="Ivanova N."/>
            <person name="Richardson P."/>
        </authorList>
    </citation>
    <scope>NUCLEOTIDE SEQUENCE [LARGE SCALE GENOMIC DNA]</scope>
    <source>
        <strain>CC9605</strain>
    </source>
</reference>
<name>SYT_SYNSC</name>
<comment type="function">
    <text evidence="1">Catalyzes the attachment of threonine to tRNA(Thr) in a two-step reaction: L-threonine is first activated by ATP to form Thr-AMP and then transferred to the acceptor end of tRNA(Thr). Also edits incorrectly charged L-seryl-tRNA(Thr).</text>
</comment>
<comment type="catalytic activity">
    <reaction evidence="1">
        <text>tRNA(Thr) + L-threonine + ATP = L-threonyl-tRNA(Thr) + AMP + diphosphate + H(+)</text>
        <dbReference type="Rhea" id="RHEA:24624"/>
        <dbReference type="Rhea" id="RHEA-COMP:9670"/>
        <dbReference type="Rhea" id="RHEA-COMP:9704"/>
        <dbReference type="ChEBI" id="CHEBI:15378"/>
        <dbReference type="ChEBI" id="CHEBI:30616"/>
        <dbReference type="ChEBI" id="CHEBI:33019"/>
        <dbReference type="ChEBI" id="CHEBI:57926"/>
        <dbReference type="ChEBI" id="CHEBI:78442"/>
        <dbReference type="ChEBI" id="CHEBI:78534"/>
        <dbReference type="ChEBI" id="CHEBI:456215"/>
        <dbReference type="EC" id="6.1.1.3"/>
    </reaction>
</comment>
<comment type="cofactor">
    <cofactor evidence="1">
        <name>Zn(2+)</name>
        <dbReference type="ChEBI" id="CHEBI:29105"/>
    </cofactor>
    <text evidence="1">Binds 1 zinc ion per subunit.</text>
</comment>
<comment type="subunit">
    <text evidence="1">Homodimer.</text>
</comment>
<comment type="subcellular location">
    <subcellularLocation>
        <location evidence="1">Cytoplasm</location>
    </subcellularLocation>
</comment>
<comment type="similarity">
    <text evidence="1">Belongs to the class-II aminoacyl-tRNA synthetase family.</text>
</comment>
<protein>
    <recommendedName>
        <fullName evidence="1">Threonine--tRNA ligase</fullName>
        <ecNumber evidence="1">6.1.1.3</ecNumber>
    </recommendedName>
    <alternativeName>
        <fullName evidence="1">Threonyl-tRNA synthetase</fullName>
        <shortName evidence="1">ThrRS</shortName>
    </alternativeName>
</protein>
<accession>Q3AKU0</accession>
<feature type="chain" id="PRO_1000020542" description="Threonine--tRNA ligase">
    <location>
        <begin position="1"/>
        <end position="611"/>
    </location>
</feature>
<feature type="region of interest" description="Disordered" evidence="2">
    <location>
        <begin position="1"/>
        <end position="27"/>
    </location>
</feature>
<feature type="region of interest" description="Catalytic" evidence="1">
    <location>
        <begin position="209"/>
        <end position="502"/>
    </location>
</feature>
<feature type="compositionally biased region" description="Low complexity" evidence="2">
    <location>
        <begin position="8"/>
        <end position="24"/>
    </location>
</feature>
<feature type="binding site" evidence="1">
    <location>
        <position position="302"/>
    </location>
    <ligand>
        <name>Zn(2+)</name>
        <dbReference type="ChEBI" id="CHEBI:29105"/>
    </ligand>
</feature>
<feature type="binding site" evidence="1">
    <location>
        <position position="353"/>
    </location>
    <ligand>
        <name>Zn(2+)</name>
        <dbReference type="ChEBI" id="CHEBI:29105"/>
    </ligand>
</feature>
<feature type="binding site" evidence="1">
    <location>
        <position position="479"/>
    </location>
    <ligand>
        <name>Zn(2+)</name>
        <dbReference type="ChEBI" id="CHEBI:29105"/>
    </ligand>
</feature>
<keyword id="KW-0030">Aminoacyl-tRNA synthetase</keyword>
<keyword id="KW-0067">ATP-binding</keyword>
<keyword id="KW-0963">Cytoplasm</keyword>
<keyword id="KW-0436">Ligase</keyword>
<keyword id="KW-0479">Metal-binding</keyword>
<keyword id="KW-0547">Nucleotide-binding</keyword>
<keyword id="KW-0648">Protein biosynthesis</keyword>
<keyword id="KW-0694">RNA-binding</keyword>
<keyword id="KW-0820">tRNA-binding</keyword>
<keyword id="KW-0862">Zinc</keyword>
<proteinExistence type="inferred from homology"/>
<sequence>MAGPEPEPVSSAAATTPAPSAPVVLPKTSESDQLLKIRHSMSHVMAMAVQQLFPKARVTIGPWTETGFYYDFDNPDPFTEADLKAIKKGMIKIINKKLPLQRVEVSRNEAEEKIKAQNEPYKLEILQGLHEPITLYTLGEDWWDLCAGPHVDHTGQLNAKAFELESLAGAYWRGDETKAQLQRIYGTAWESPEQLAEHKRRKEEALRRDHRRIGKDLDLFSIEDEAGAGLVFWHPRGARIRLLIEEFWRQAHFEGGYELLYTPHVADISLWKTSGHLDFYAESMFGPMEVDEREYQLKPMNCPFHVLTYASKLRSYRELPIRWAELGTVYRYERPGVMHGLMRVRGFTQDDAHVFCLPEQISDEILKILDLTERILSAFDFSNYEINLSTRPEKSIGEDAVWDLATKGLIEALERKGWAYKIDEGGGAFYGPKIDLKIEDAIGRMWQCSTIQLDFNLPERFELDYIAADGSKQRPIMIHRAIFGSLERFFGIMTENYAGDYPFWLAPEQVRLLPVTDEVQPYAEQLLDQLTKAGVRATVDRSGDRLGKLIRTGEQMKIPVLAVIGAKEAEQNAVSLRSRRDGDLGVTAVSDLLSAAQMANSERAAGLELNR</sequence>
<gene>
    <name evidence="1" type="primary">thrS</name>
    <name type="ordered locus">Syncc9605_1034</name>
</gene>
<dbReference type="EC" id="6.1.1.3" evidence="1"/>
<dbReference type="EMBL" id="CP000110">
    <property type="protein sequence ID" value="ABB34792.1"/>
    <property type="molecule type" value="Genomic_DNA"/>
</dbReference>
<dbReference type="RefSeq" id="WP_011364016.1">
    <property type="nucleotide sequence ID" value="NC_007516.1"/>
</dbReference>
<dbReference type="SMR" id="Q3AKU0"/>
<dbReference type="STRING" id="110662.Syncc9605_1034"/>
<dbReference type="KEGG" id="syd:Syncc9605_1034"/>
<dbReference type="eggNOG" id="COG0441">
    <property type="taxonomic scope" value="Bacteria"/>
</dbReference>
<dbReference type="HOGENOM" id="CLU_008554_0_1_3"/>
<dbReference type="OrthoDB" id="9802304at2"/>
<dbReference type="GO" id="GO:0005737">
    <property type="term" value="C:cytoplasm"/>
    <property type="evidence" value="ECO:0007669"/>
    <property type="project" value="UniProtKB-SubCell"/>
</dbReference>
<dbReference type="GO" id="GO:0005524">
    <property type="term" value="F:ATP binding"/>
    <property type="evidence" value="ECO:0007669"/>
    <property type="project" value="UniProtKB-UniRule"/>
</dbReference>
<dbReference type="GO" id="GO:0046872">
    <property type="term" value="F:metal ion binding"/>
    <property type="evidence" value="ECO:0007669"/>
    <property type="project" value="UniProtKB-KW"/>
</dbReference>
<dbReference type="GO" id="GO:0004829">
    <property type="term" value="F:threonine-tRNA ligase activity"/>
    <property type="evidence" value="ECO:0007669"/>
    <property type="project" value="UniProtKB-UniRule"/>
</dbReference>
<dbReference type="GO" id="GO:0000049">
    <property type="term" value="F:tRNA binding"/>
    <property type="evidence" value="ECO:0007669"/>
    <property type="project" value="UniProtKB-KW"/>
</dbReference>
<dbReference type="GO" id="GO:0006435">
    <property type="term" value="P:threonyl-tRNA aminoacylation"/>
    <property type="evidence" value="ECO:0007669"/>
    <property type="project" value="UniProtKB-UniRule"/>
</dbReference>
<dbReference type="CDD" id="cd00860">
    <property type="entry name" value="ThrRS_anticodon"/>
    <property type="match status" value="1"/>
</dbReference>
<dbReference type="CDD" id="cd00771">
    <property type="entry name" value="ThrRS_core"/>
    <property type="match status" value="1"/>
</dbReference>
<dbReference type="FunFam" id="3.30.54.20:FF:000002">
    <property type="entry name" value="Threonine--tRNA ligase"/>
    <property type="match status" value="1"/>
</dbReference>
<dbReference type="FunFam" id="3.30.930.10:FF:000002">
    <property type="entry name" value="Threonine--tRNA ligase"/>
    <property type="match status" value="1"/>
</dbReference>
<dbReference type="FunFam" id="3.40.50.800:FF:000001">
    <property type="entry name" value="Threonine--tRNA ligase"/>
    <property type="match status" value="1"/>
</dbReference>
<dbReference type="Gene3D" id="3.30.54.20">
    <property type="match status" value="1"/>
</dbReference>
<dbReference type="Gene3D" id="3.40.50.800">
    <property type="entry name" value="Anticodon-binding domain"/>
    <property type="match status" value="1"/>
</dbReference>
<dbReference type="Gene3D" id="3.30.930.10">
    <property type="entry name" value="Bira Bifunctional Protein, Domain 2"/>
    <property type="match status" value="1"/>
</dbReference>
<dbReference type="Gene3D" id="3.30.980.10">
    <property type="entry name" value="Threonyl-trna Synthetase, Chain A, domain 2"/>
    <property type="match status" value="1"/>
</dbReference>
<dbReference type="HAMAP" id="MF_00184">
    <property type="entry name" value="Thr_tRNA_synth"/>
    <property type="match status" value="1"/>
</dbReference>
<dbReference type="InterPro" id="IPR002314">
    <property type="entry name" value="aa-tRNA-synt_IIb"/>
</dbReference>
<dbReference type="InterPro" id="IPR006195">
    <property type="entry name" value="aa-tRNA-synth_II"/>
</dbReference>
<dbReference type="InterPro" id="IPR045864">
    <property type="entry name" value="aa-tRNA-synth_II/BPL/LPL"/>
</dbReference>
<dbReference type="InterPro" id="IPR004154">
    <property type="entry name" value="Anticodon-bd"/>
</dbReference>
<dbReference type="InterPro" id="IPR036621">
    <property type="entry name" value="Anticodon-bd_dom_sf"/>
</dbReference>
<dbReference type="InterPro" id="IPR002320">
    <property type="entry name" value="Thr-tRNA-ligase_IIa"/>
</dbReference>
<dbReference type="InterPro" id="IPR018163">
    <property type="entry name" value="Thr/Ala-tRNA-synth_IIc_edit"/>
</dbReference>
<dbReference type="InterPro" id="IPR047246">
    <property type="entry name" value="ThrRS_anticodon"/>
</dbReference>
<dbReference type="InterPro" id="IPR033728">
    <property type="entry name" value="ThrRS_core"/>
</dbReference>
<dbReference type="InterPro" id="IPR012947">
    <property type="entry name" value="tRNA_SAD"/>
</dbReference>
<dbReference type="NCBIfam" id="TIGR00418">
    <property type="entry name" value="thrS"/>
    <property type="match status" value="1"/>
</dbReference>
<dbReference type="PANTHER" id="PTHR11451:SF44">
    <property type="entry name" value="THREONINE--TRNA LIGASE, CHLOROPLASTIC_MITOCHONDRIAL 2"/>
    <property type="match status" value="1"/>
</dbReference>
<dbReference type="PANTHER" id="PTHR11451">
    <property type="entry name" value="THREONINE-TRNA LIGASE"/>
    <property type="match status" value="1"/>
</dbReference>
<dbReference type="Pfam" id="PF03129">
    <property type="entry name" value="HGTP_anticodon"/>
    <property type="match status" value="1"/>
</dbReference>
<dbReference type="Pfam" id="PF00587">
    <property type="entry name" value="tRNA-synt_2b"/>
    <property type="match status" value="1"/>
</dbReference>
<dbReference type="Pfam" id="PF07973">
    <property type="entry name" value="tRNA_SAD"/>
    <property type="match status" value="1"/>
</dbReference>
<dbReference type="PRINTS" id="PR01047">
    <property type="entry name" value="TRNASYNTHTHR"/>
</dbReference>
<dbReference type="SMART" id="SM00863">
    <property type="entry name" value="tRNA_SAD"/>
    <property type="match status" value="1"/>
</dbReference>
<dbReference type="SUPFAM" id="SSF52954">
    <property type="entry name" value="Class II aaRS ABD-related"/>
    <property type="match status" value="1"/>
</dbReference>
<dbReference type="SUPFAM" id="SSF55681">
    <property type="entry name" value="Class II aaRS and biotin synthetases"/>
    <property type="match status" value="1"/>
</dbReference>
<dbReference type="SUPFAM" id="SSF55186">
    <property type="entry name" value="ThrRS/AlaRS common domain"/>
    <property type="match status" value="1"/>
</dbReference>
<dbReference type="PROSITE" id="PS50862">
    <property type="entry name" value="AA_TRNA_LIGASE_II"/>
    <property type="match status" value="1"/>
</dbReference>